<comment type="function">
    <text evidence="1">An accessory protein needed during the final step in the assembly of 30S ribosomal subunit, possibly for assembly of the head region. Essential for efficient processing of 16S rRNA. May be needed both before and after RbfA during the maturation of 16S rRNA. It has affinity for free ribosomal 30S subunits but not for 70S ribosomes.</text>
</comment>
<comment type="subunit">
    <text evidence="1">Binds ribosomal protein uS19.</text>
</comment>
<comment type="subcellular location">
    <subcellularLocation>
        <location evidence="1">Cytoplasm</location>
    </subcellularLocation>
</comment>
<comment type="domain">
    <text evidence="1">The PRC barrel domain binds ribosomal protein uS19.</text>
</comment>
<comment type="similarity">
    <text evidence="1">Belongs to the RimM family.</text>
</comment>
<evidence type="ECO:0000255" key="1">
    <source>
        <dbReference type="HAMAP-Rule" id="MF_00014"/>
    </source>
</evidence>
<dbReference type="EMBL" id="CP000961">
    <property type="protein sequence ID" value="ACA85547.1"/>
    <property type="molecule type" value="Genomic_DNA"/>
</dbReference>
<dbReference type="RefSeq" id="WP_012323893.1">
    <property type="nucleotide sequence ID" value="NC_010506.1"/>
</dbReference>
<dbReference type="SMR" id="B1KI69"/>
<dbReference type="STRING" id="392500.Swoo_1255"/>
<dbReference type="KEGG" id="swd:Swoo_1255"/>
<dbReference type="eggNOG" id="COG0806">
    <property type="taxonomic scope" value="Bacteria"/>
</dbReference>
<dbReference type="HOGENOM" id="CLU_077636_1_0_6"/>
<dbReference type="Proteomes" id="UP000002168">
    <property type="component" value="Chromosome"/>
</dbReference>
<dbReference type="GO" id="GO:0005737">
    <property type="term" value="C:cytoplasm"/>
    <property type="evidence" value="ECO:0007669"/>
    <property type="project" value="UniProtKB-SubCell"/>
</dbReference>
<dbReference type="GO" id="GO:0005840">
    <property type="term" value="C:ribosome"/>
    <property type="evidence" value="ECO:0007669"/>
    <property type="project" value="InterPro"/>
</dbReference>
<dbReference type="GO" id="GO:0043022">
    <property type="term" value="F:ribosome binding"/>
    <property type="evidence" value="ECO:0007669"/>
    <property type="project" value="InterPro"/>
</dbReference>
<dbReference type="GO" id="GO:0042274">
    <property type="term" value="P:ribosomal small subunit biogenesis"/>
    <property type="evidence" value="ECO:0007669"/>
    <property type="project" value="UniProtKB-UniRule"/>
</dbReference>
<dbReference type="GO" id="GO:0006364">
    <property type="term" value="P:rRNA processing"/>
    <property type="evidence" value="ECO:0007669"/>
    <property type="project" value="UniProtKB-UniRule"/>
</dbReference>
<dbReference type="Gene3D" id="2.30.30.240">
    <property type="entry name" value="PRC-barrel domain"/>
    <property type="match status" value="1"/>
</dbReference>
<dbReference type="Gene3D" id="2.40.30.60">
    <property type="entry name" value="RimM"/>
    <property type="match status" value="1"/>
</dbReference>
<dbReference type="HAMAP" id="MF_00014">
    <property type="entry name" value="Ribosome_mat_RimM"/>
    <property type="match status" value="1"/>
</dbReference>
<dbReference type="InterPro" id="IPR027275">
    <property type="entry name" value="PRC-brl_dom"/>
</dbReference>
<dbReference type="InterPro" id="IPR011033">
    <property type="entry name" value="PRC_barrel-like_sf"/>
</dbReference>
<dbReference type="InterPro" id="IPR011961">
    <property type="entry name" value="RimM"/>
</dbReference>
<dbReference type="InterPro" id="IPR002676">
    <property type="entry name" value="RimM_N"/>
</dbReference>
<dbReference type="InterPro" id="IPR036976">
    <property type="entry name" value="RimM_N_sf"/>
</dbReference>
<dbReference type="InterPro" id="IPR009000">
    <property type="entry name" value="Transl_B-barrel_sf"/>
</dbReference>
<dbReference type="NCBIfam" id="TIGR02273">
    <property type="entry name" value="16S_RimM"/>
    <property type="match status" value="1"/>
</dbReference>
<dbReference type="PANTHER" id="PTHR33692">
    <property type="entry name" value="RIBOSOME MATURATION FACTOR RIMM"/>
    <property type="match status" value="1"/>
</dbReference>
<dbReference type="PANTHER" id="PTHR33692:SF1">
    <property type="entry name" value="RIBOSOME MATURATION FACTOR RIMM"/>
    <property type="match status" value="1"/>
</dbReference>
<dbReference type="Pfam" id="PF05239">
    <property type="entry name" value="PRC"/>
    <property type="match status" value="1"/>
</dbReference>
<dbReference type="Pfam" id="PF01782">
    <property type="entry name" value="RimM"/>
    <property type="match status" value="1"/>
</dbReference>
<dbReference type="SUPFAM" id="SSF50346">
    <property type="entry name" value="PRC-barrel domain"/>
    <property type="match status" value="1"/>
</dbReference>
<dbReference type="SUPFAM" id="SSF50447">
    <property type="entry name" value="Translation proteins"/>
    <property type="match status" value="1"/>
</dbReference>
<name>RIMM_SHEWM</name>
<accession>B1KI69</accession>
<reference key="1">
    <citation type="submission" date="2008-02" db="EMBL/GenBank/DDBJ databases">
        <title>Complete sequence of Shewanella woodyi ATCC 51908.</title>
        <authorList>
            <consortium name="US DOE Joint Genome Institute"/>
            <person name="Copeland A."/>
            <person name="Lucas S."/>
            <person name="Lapidus A."/>
            <person name="Glavina del Rio T."/>
            <person name="Dalin E."/>
            <person name="Tice H."/>
            <person name="Bruce D."/>
            <person name="Goodwin L."/>
            <person name="Pitluck S."/>
            <person name="Sims D."/>
            <person name="Brettin T."/>
            <person name="Detter J.C."/>
            <person name="Han C."/>
            <person name="Kuske C.R."/>
            <person name="Schmutz J."/>
            <person name="Larimer F."/>
            <person name="Land M."/>
            <person name="Hauser L."/>
            <person name="Kyrpides N."/>
            <person name="Lykidis A."/>
            <person name="Zhao J.-S."/>
            <person name="Richardson P."/>
        </authorList>
    </citation>
    <scope>NUCLEOTIDE SEQUENCE [LARGE SCALE GENOMIC DNA]</scope>
    <source>
        <strain>ATCC 51908 / MS32</strain>
    </source>
</reference>
<proteinExistence type="inferred from homology"/>
<protein>
    <recommendedName>
        <fullName evidence="1">Ribosome maturation factor RimM</fullName>
    </recommendedName>
</protein>
<keyword id="KW-0143">Chaperone</keyword>
<keyword id="KW-0963">Cytoplasm</keyword>
<keyword id="KW-1185">Reference proteome</keyword>
<keyword id="KW-0690">Ribosome biogenesis</keyword>
<keyword id="KW-0698">rRNA processing</keyword>
<gene>
    <name evidence="1" type="primary">rimM</name>
    <name type="ordered locus">Swoo_1255</name>
</gene>
<sequence>MSSKQEPVVLGKIGSSHGIKGWLKITTYTESVEGIFDYSPWLIKEQGEWREVKVTQWRFQGKAVVASLEGVETRDQAQMLTNCEIAVSAEQMQELPEDEFYWRDLIGCEVTNTKGYNMGKVQEIVETGSNDVLLVKANAKDGFGKAERMIPFVTEQFVLEVNLTEKQILVDWDPDF</sequence>
<organism>
    <name type="scientific">Shewanella woodyi (strain ATCC 51908 / MS32)</name>
    <dbReference type="NCBI Taxonomy" id="392500"/>
    <lineage>
        <taxon>Bacteria</taxon>
        <taxon>Pseudomonadati</taxon>
        <taxon>Pseudomonadota</taxon>
        <taxon>Gammaproteobacteria</taxon>
        <taxon>Alteromonadales</taxon>
        <taxon>Shewanellaceae</taxon>
        <taxon>Shewanella</taxon>
    </lineage>
</organism>
<feature type="chain" id="PRO_1000089519" description="Ribosome maturation factor RimM">
    <location>
        <begin position="1"/>
        <end position="176"/>
    </location>
</feature>
<feature type="domain" description="PRC barrel" evidence="1">
    <location>
        <begin position="96"/>
        <end position="176"/>
    </location>
</feature>